<proteinExistence type="inferred from homology"/>
<accession>B8G7Y8</accession>
<keyword id="KW-0169">Cobalamin biosynthesis</keyword>
<keyword id="KW-0315">Glutamine amidotransferase</keyword>
<dbReference type="EMBL" id="CP001337">
    <property type="protein sequence ID" value="ACL24167.1"/>
    <property type="molecule type" value="Genomic_DNA"/>
</dbReference>
<dbReference type="RefSeq" id="WP_012616531.1">
    <property type="nucleotide sequence ID" value="NC_011831.1"/>
</dbReference>
<dbReference type="STRING" id="326427.Cagg_1259"/>
<dbReference type="KEGG" id="cag:Cagg_1259"/>
<dbReference type="eggNOG" id="COG1492">
    <property type="taxonomic scope" value="Bacteria"/>
</dbReference>
<dbReference type="HOGENOM" id="CLU_019250_2_2_0"/>
<dbReference type="OrthoDB" id="9808302at2"/>
<dbReference type="UniPathway" id="UPA00148"/>
<dbReference type="Proteomes" id="UP000002508">
    <property type="component" value="Chromosome"/>
</dbReference>
<dbReference type="GO" id="GO:0015420">
    <property type="term" value="F:ABC-type vitamin B12 transporter activity"/>
    <property type="evidence" value="ECO:0007669"/>
    <property type="project" value="UniProtKB-UniRule"/>
</dbReference>
<dbReference type="GO" id="GO:0003824">
    <property type="term" value="F:catalytic activity"/>
    <property type="evidence" value="ECO:0007669"/>
    <property type="project" value="InterPro"/>
</dbReference>
<dbReference type="GO" id="GO:0009236">
    <property type="term" value="P:cobalamin biosynthetic process"/>
    <property type="evidence" value="ECO:0007669"/>
    <property type="project" value="UniProtKB-UniRule"/>
</dbReference>
<dbReference type="CDD" id="cd05389">
    <property type="entry name" value="CobQ_N"/>
    <property type="match status" value="1"/>
</dbReference>
<dbReference type="CDD" id="cd01750">
    <property type="entry name" value="GATase1_CobQ"/>
    <property type="match status" value="1"/>
</dbReference>
<dbReference type="Gene3D" id="3.40.50.880">
    <property type="match status" value="1"/>
</dbReference>
<dbReference type="Gene3D" id="3.40.50.300">
    <property type="entry name" value="P-loop containing nucleotide triphosphate hydrolases"/>
    <property type="match status" value="1"/>
</dbReference>
<dbReference type="HAMAP" id="MF_00028">
    <property type="entry name" value="CobQ"/>
    <property type="match status" value="1"/>
</dbReference>
<dbReference type="InterPro" id="IPR029062">
    <property type="entry name" value="Class_I_gatase-like"/>
</dbReference>
<dbReference type="InterPro" id="IPR002586">
    <property type="entry name" value="CobQ/CobB/MinD/ParA_Nub-bd_dom"/>
</dbReference>
<dbReference type="InterPro" id="IPR033949">
    <property type="entry name" value="CobQ_GATase1"/>
</dbReference>
<dbReference type="InterPro" id="IPR047045">
    <property type="entry name" value="CobQ_N"/>
</dbReference>
<dbReference type="InterPro" id="IPR004459">
    <property type="entry name" value="CobQ_synth"/>
</dbReference>
<dbReference type="InterPro" id="IPR011698">
    <property type="entry name" value="GATase_3"/>
</dbReference>
<dbReference type="InterPro" id="IPR027417">
    <property type="entry name" value="P-loop_NTPase"/>
</dbReference>
<dbReference type="NCBIfam" id="TIGR00313">
    <property type="entry name" value="cobQ"/>
    <property type="match status" value="1"/>
</dbReference>
<dbReference type="NCBIfam" id="NF001989">
    <property type="entry name" value="PRK00784.1"/>
    <property type="match status" value="1"/>
</dbReference>
<dbReference type="PANTHER" id="PTHR21343:SF1">
    <property type="entry name" value="COBYRIC ACID SYNTHASE"/>
    <property type="match status" value="1"/>
</dbReference>
<dbReference type="PANTHER" id="PTHR21343">
    <property type="entry name" value="DETHIOBIOTIN SYNTHETASE"/>
    <property type="match status" value="1"/>
</dbReference>
<dbReference type="Pfam" id="PF01656">
    <property type="entry name" value="CbiA"/>
    <property type="match status" value="1"/>
</dbReference>
<dbReference type="Pfam" id="PF07685">
    <property type="entry name" value="GATase_3"/>
    <property type="match status" value="1"/>
</dbReference>
<dbReference type="SUPFAM" id="SSF52317">
    <property type="entry name" value="Class I glutamine amidotransferase-like"/>
    <property type="match status" value="1"/>
</dbReference>
<dbReference type="SUPFAM" id="SSF52540">
    <property type="entry name" value="P-loop containing nucleoside triphosphate hydrolases"/>
    <property type="match status" value="1"/>
</dbReference>
<dbReference type="PROSITE" id="PS51274">
    <property type="entry name" value="GATASE_COBBQ"/>
    <property type="match status" value="1"/>
</dbReference>
<organism>
    <name type="scientific">Chloroflexus aggregans (strain MD-66 / DSM 9485)</name>
    <dbReference type="NCBI Taxonomy" id="326427"/>
    <lineage>
        <taxon>Bacteria</taxon>
        <taxon>Bacillati</taxon>
        <taxon>Chloroflexota</taxon>
        <taxon>Chloroflexia</taxon>
        <taxon>Chloroflexales</taxon>
        <taxon>Chloroflexineae</taxon>
        <taxon>Chloroflexaceae</taxon>
        <taxon>Chloroflexus</taxon>
    </lineage>
</organism>
<name>COBQ_CHLAD</name>
<feature type="chain" id="PRO_1000116899" description="Cobyric acid synthase">
    <location>
        <begin position="1"/>
        <end position="491"/>
    </location>
</feature>
<feature type="domain" description="GATase cobBQ-type" evidence="1">
    <location>
        <begin position="251"/>
        <end position="444"/>
    </location>
</feature>
<feature type="active site" description="Nucleophile" evidence="1">
    <location>
        <position position="329"/>
    </location>
</feature>
<feature type="active site" evidence="1">
    <location>
        <position position="436"/>
    </location>
</feature>
<gene>
    <name evidence="1" type="primary">cobQ</name>
    <name type="ordered locus">Cagg_1259</name>
</gene>
<reference key="1">
    <citation type="submission" date="2008-12" db="EMBL/GenBank/DDBJ databases">
        <title>Complete sequence of Chloroflexus aggregans DSM 9485.</title>
        <authorList>
            <consortium name="US DOE Joint Genome Institute"/>
            <person name="Lucas S."/>
            <person name="Copeland A."/>
            <person name="Lapidus A."/>
            <person name="Glavina del Rio T."/>
            <person name="Dalin E."/>
            <person name="Tice H."/>
            <person name="Pitluck S."/>
            <person name="Foster B."/>
            <person name="Larimer F."/>
            <person name="Land M."/>
            <person name="Hauser L."/>
            <person name="Kyrpides N."/>
            <person name="Mikhailova N."/>
            <person name="Bryant D.A."/>
            <person name="Richardson P."/>
        </authorList>
    </citation>
    <scope>NUCLEOTIDE SEQUENCE [LARGE SCALE GENOMIC DNA]</scope>
    <source>
        <strain>MD-66 / DSM 9485</strain>
    </source>
</reference>
<comment type="function">
    <text evidence="1">Catalyzes amidations at positions B, D, E, and G on adenosylcobyrinic A,C-diamide. NH(2) groups are provided by glutamine, and one molecule of ATP is hydrogenolyzed for each amidation.</text>
</comment>
<comment type="pathway">
    <text evidence="1">Cofactor biosynthesis; adenosylcobalamin biosynthesis.</text>
</comment>
<comment type="similarity">
    <text evidence="1">Belongs to the CobB/CobQ family. CobQ subfamily.</text>
</comment>
<sequence>MPAPVVMVIGTASSVGKSTLVAALCRLAARRGLRVAPFKAQNMSNNAAVTADGGEIARSTAVQAAAAGIAPTVAMNPILIKPEGQRRSQIIVEGRPWQTLAAGDFWRRKTLLWEVVTRNLDALRATYDLVIAEGAGSPVELNLKAGDIVNMRVAVYAQARTLLVGDIDRGGIFAQLLGTLMLLDPTERQLIQGLIVNRFRGDPALFVDGVRILEERSGIPVLGVVPWIEDLGLAEEDAVAIEQSTPVMAQGITIAVIRLPTIANFDDFDPLAREPGVTVRYIDRPGELAGVAAVIIPGVKHTIAARRWLRERGFDEALRRFPGAIVGICGGYQLLGERISDPLAVEGNGGDEVGLGLLPVETIFVTTKQTTQTVAHARVPWGGQAPLHGYEIHMGRTHRIGAASALLTIIQRGAQAVLEEDGCISPDGRVWGCYLHGLFTNDEFRHGWLRQLGWQPTTSVSGSVDPINRLADHVARALGETVLDRLFRLTE</sequence>
<evidence type="ECO:0000255" key="1">
    <source>
        <dbReference type="HAMAP-Rule" id="MF_00028"/>
    </source>
</evidence>
<protein>
    <recommendedName>
        <fullName evidence="1">Cobyric acid synthase</fullName>
    </recommendedName>
</protein>